<name>DBP9_ASPCL</name>
<sequence>MKRKLDANDVPSAEVAEGKEAKDADNTDFENLNLDPRLRQALIKEQFTKPTPVQSKAIPLALEGKDILARAKTGSGKTAAYVLPILQTILQKKAADPSLKATTGLILVPTRELAEQVQSVITKFTAFCGKDVRSVNLTQKVSDAVQRTMLADYPDLIVSTPARVIANLGSSALALDNLTHLVIDEADLVLSYGYDEDINALAKAIPRGVQTFLMSATLTSEVDTLKGLFCRNPVVLKLEDKEDEGAGISQFVVRCAEDEKFLLTYVIFKLQLIKGKVIIFVGDIDRCYRVKLFLEQFGIKSCVLNSELPINSRIHVVQEFNKGVYDIIIAADEQEVMGARTTFKKSKEITDGDEEETRDKMGSSEDEDNEPEDNDKKSAHPEKRRKTSGKGKDYGISRGIDFQNVACVLNFDLPTTSKSYTHRIGRTGRAGKAGMALSFVVPADEFGKHKPTSFPTAKYDESVLAKIVKRQAKLDHEVKPYHFEMKQVDAFRYRMTDALRSVTRLAIQEARAREIRQELVKSEKLKRHFEENPEELKQLRHDGELRAARIQPHLKHIPDYLMPSKGRKGISSENVGYVGFTKQSDNRIRKAREKNRGKGKGRKPSGVRKVDPLKTFNRGRK</sequence>
<dbReference type="EC" id="3.6.4.13"/>
<dbReference type="EMBL" id="DS027045">
    <property type="protein sequence ID" value="EAW14328.1"/>
    <property type="molecule type" value="Genomic_DNA"/>
</dbReference>
<dbReference type="RefSeq" id="XP_001275754.1">
    <property type="nucleotide sequence ID" value="XM_001275753.1"/>
</dbReference>
<dbReference type="SMR" id="A1C7F7"/>
<dbReference type="STRING" id="344612.A1C7F7"/>
<dbReference type="EnsemblFungi" id="EAW14328">
    <property type="protein sequence ID" value="EAW14328"/>
    <property type="gene ID" value="ACLA_073630"/>
</dbReference>
<dbReference type="GeneID" id="4707837"/>
<dbReference type="KEGG" id="act:ACLA_073630"/>
<dbReference type="VEuPathDB" id="FungiDB:ACLA_073630"/>
<dbReference type="eggNOG" id="KOG0346">
    <property type="taxonomic scope" value="Eukaryota"/>
</dbReference>
<dbReference type="HOGENOM" id="CLU_003041_17_1_1"/>
<dbReference type="OMA" id="NASEQCV"/>
<dbReference type="OrthoDB" id="1191041at2759"/>
<dbReference type="Proteomes" id="UP000006701">
    <property type="component" value="Unassembled WGS sequence"/>
</dbReference>
<dbReference type="GO" id="GO:0005829">
    <property type="term" value="C:cytosol"/>
    <property type="evidence" value="ECO:0007669"/>
    <property type="project" value="TreeGrafter"/>
</dbReference>
<dbReference type="GO" id="GO:0005730">
    <property type="term" value="C:nucleolus"/>
    <property type="evidence" value="ECO:0007669"/>
    <property type="project" value="UniProtKB-SubCell"/>
</dbReference>
<dbReference type="GO" id="GO:0005524">
    <property type="term" value="F:ATP binding"/>
    <property type="evidence" value="ECO:0007669"/>
    <property type="project" value="UniProtKB-KW"/>
</dbReference>
<dbReference type="GO" id="GO:0016887">
    <property type="term" value="F:ATP hydrolysis activity"/>
    <property type="evidence" value="ECO:0007669"/>
    <property type="project" value="RHEA"/>
</dbReference>
<dbReference type="GO" id="GO:0003678">
    <property type="term" value="F:DNA helicase activity"/>
    <property type="evidence" value="ECO:0007669"/>
    <property type="project" value="EnsemblFungi"/>
</dbReference>
<dbReference type="GO" id="GO:0033677">
    <property type="term" value="F:DNA/RNA helicase activity"/>
    <property type="evidence" value="ECO:0007669"/>
    <property type="project" value="EnsemblFungi"/>
</dbReference>
<dbReference type="GO" id="GO:0003723">
    <property type="term" value="F:RNA binding"/>
    <property type="evidence" value="ECO:0007669"/>
    <property type="project" value="UniProtKB-KW"/>
</dbReference>
<dbReference type="GO" id="GO:0003724">
    <property type="term" value="F:RNA helicase activity"/>
    <property type="evidence" value="ECO:0007669"/>
    <property type="project" value="UniProtKB-EC"/>
</dbReference>
<dbReference type="GO" id="GO:0000463">
    <property type="term" value="P:maturation of LSU-rRNA from tricistronic rRNA transcript (SSU-rRNA, 5.8S rRNA, LSU-rRNA)"/>
    <property type="evidence" value="ECO:0007669"/>
    <property type="project" value="EnsemblFungi"/>
</dbReference>
<dbReference type="CDD" id="cd17961">
    <property type="entry name" value="DEADc_DDX56"/>
    <property type="match status" value="1"/>
</dbReference>
<dbReference type="CDD" id="cd18787">
    <property type="entry name" value="SF2_C_DEAD"/>
    <property type="match status" value="1"/>
</dbReference>
<dbReference type="Gene3D" id="3.40.50.300">
    <property type="entry name" value="P-loop containing nucleotide triphosphate hydrolases"/>
    <property type="match status" value="2"/>
</dbReference>
<dbReference type="InterPro" id="IPR011545">
    <property type="entry name" value="DEAD/DEAH_box_helicase_dom"/>
</dbReference>
<dbReference type="InterPro" id="IPR050079">
    <property type="entry name" value="DEAD_box_RNA_helicase"/>
</dbReference>
<dbReference type="InterPro" id="IPR014001">
    <property type="entry name" value="Helicase_ATP-bd"/>
</dbReference>
<dbReference type="InterPro" id="IPR001650">
    <property type="entry name" value="Helicase_C-like"/>
</dbReference>
<dbReference type="InterPro" id="IPR027417">
    <property type="entry name" value="P-loop_NTPase"/>
</dbReference>
<dbReference type="InterPro" id="IPR014014">
    <property type="entry name" value="RNA_helicase_DEAD_Q_motif"/>
</dbReference>
<dbReference type="PANTHER" id="PTHR47959">
    <property type="entry name" value="ATP-DEPENDENT RNA HELICASE RHLE-RELATED"/>
    <property type="match status" value="1"/>
</dbReference>
<dbReference type="PANTHER" id="PTHR47959:SF21">
    <property type="entry name" value="DEAD-BOX HELICASE 56"/>
    <property type="match status" value="1"/>
</dbReference>
<dbReference type="Pfam" id="PF00270">
    <property type="entry name" value="DEAD"/>
    <property type="match status" value="1"/>
</dbReference>
<dbReference type="Pfam" id="PF00271">
    <property type="entry name" value="Helicase_C"/>
    <property type="match status" value="2"/>
</dbReference>
<dbReference type="SMART" id="SM00487">
    <property type="entry name" value="DEXDc"/>
    <property type="match status" value="1"/>
</dbReference>
<dbReference type="SMART" id="SM00490">
    <property type="entry name" value="HELICc"/>
    <property type="match status" value="1"/>
</dbReference>
<dbReference type="SUPFAM" id="SSF52540">
    <property type="entry name" value="P-loop containing nucleoside triphosphate hydrolases"/>
    <property type="match status" value="2"/>
</dbReference>
<dbReference type="PROSITE" id="PS51192">
    <property type="entry name" value="HELICASE_ATP_BIND_1"/>
    <property type="match status" value="1"/>
</dbReference>
<dbReference type="PROSITE" id="PS51194">
    <property type="entry name" value="HELICASE_CTER"/>
    <property type="match status" value="1"/>
</dbReference>
<dbReference type="PROSITE" id="PS51195">
    <property type="entry name" value="Q_MOTIF"/>
    <property type="match status" value="1"/>
</dbReference>
<evidence type="ECO:0000250" key="1"/>
<evidence type="ECO:0000255" key="2">
    <source>
        <dbReference type="PROSITE-ProRule" id="PRU00541"/>
    </source>
</evidence>
<evidence type="ECO:0000255" key="3">
    <source>
        <dbReference type="PROSITE-ProRule" id="PRU00542"/>
    </source>
</evidence>
<evidence type="ECO:0000256" key="4">
    <source>
        <dbReference type="SAM" id="MobiDB-lite"/>
    </source>
</evidence>
<evidence type="ECO:0000305" key="5"/>
<organism>
    <name type="scientific">Aspergillus clavatus (strain ATCC 1007 / CBS 513.65 / DSM 816 / NCTC 3887 / NRRL 1 / QM 1276 / 107)</name>
    <dbReference type="NCBI Taxonomy" id="344612"/>
    <lineage>
        <taxon>Eukaryota</taxon>
        <taxon>Fungi</taxon>
        <taxon>Dikarya</taxon>
        <taxon>Ascomycota</taxon>
        <taxon>Pezizomycotina</taxon>
        <taxon>Eurotiomycetes</taxon>
        <taxon>Eurotiomycetidae</taxon>
        <taxon>Eurotiales</taxon>
        <taxon>Aspergillaceae</taxon>
        <taxon>Aspergillus</taxon>
        <taxon>Aspergillus subgen. Fumigati</taxon>
    </lineage>
</organism>
<gene>
    <name type="primary">dbp9</name>
    <name type="ORF">ACLA_073630</name>
</gene>
<protein>
    <recommendedName>
        <fullName>ATP-dependent RNA helicase dbp9</fullName>
        <ecNumber>3.6.4.13</ecNumber>
    </recommendedName>
</protein>
<proteinExistence type="inferred from homology"/>
<reference key="1">
    <citation type="journal article" date="2008" name="PLoS Genet.">
        <title>Genomic islands in the pathogenic filamentous fungus Aspergillus fumigatus.</title>
        <authorList>
            <person name="Fedorova N.D."/>
            <person name="Khaldi N."/>
            <person name="Joardar V.S."/>
            <person name="Maiti R."/>
            <person name="Amedeo P."/>
            <person name="Anderson M.J."/>
            <person name="Crabtree J."/>
            <person name="Silva J.C."/>
            <person name="Badger J.H."/>
            <person name="Albarraq A."/>
            <person name="Angiuoli S."/>
            <person name="Bussey H."/>
            <person name="Bowyer P."/>
            <person name="Cotty P.J."/>
            <person name="Dyer P.S."/>
            <person name="Egan A."/>
            <person name="Galens K."/>
            <person name="Fraser-Liggett C.M."/>
            <person name="Haas B.J."/>
            <person name="Inman J.M."/>
            <person name="Kent R."/>
            <person name="Lemieux S."/>
            <person name="Malavazi I."/>
            <person name="Orvis J."/>
            <person name="Roemer T."/>
            <person name="Ronning C.M."/>
            <person name="Sundaram J.P."/>
            <person name="Sutton G."/>
            <person name="Turner G."/>
            <person name="Venter J.C."/>
            <person name="White O.R."/>
            <person name="Whitty B.R."/>
            <person name="Youngman P."/>
            <person name="Wolfe K.H."/>
            <person name="Goldman G.H."/>
            <person name="Wortman J.R."/>
            <person name="Jiang B."/>
            <person name="Denning D.W."/>
            <person name="Nierman W.C."/>
        </authorList>
    </citation>
    <scope>NUCLEOTIDE SEQUENCE [LARGE SCALE GENOMIC DNA]</scope>
    <source>
        <strain>ATCC 1007 / CBS 513.65 / DSM 816 / NCTC 3887 / NRRL 1 / QM 1276 / 107</strain>
    </source>
</reference>
<comment type="function">
    <text evidence="1">ATP-binding RNA helicase involved in the biogenesis of 60S ribosomal subunits and is required for the normal formation of 25S and 5.8S rRNAs.</text>
</comment>
<comment type="catalytic activity">
    <reaction>
        <text>ATP + H2O = ADP + phosphate + H(+)</text>
        <dbReference type="Rhea" id="RHEA:13065"/>
        <dbReference type="ChEBI" id="CHEBI:15377"/>
        <dbReference type="ChEBI" id="CHEBI:15378"/>
        <dbReference type="ChEBI" id="CHEBI:30616"/>
        <dbReference type="ChEBI" id="CHEBI:43474"/>
        <dbReference type="ChEBI" id="CHEBI:456216"/>
        <dbReference type="EC" id="3.6.4.13"/>
    </reaction>
</comment>
<comment type="subcellular location">
    <subcellularLocation>
        <location evidence="1">Nucleus</location>
        <location evidence="1">Nucleolus</location>
    </subcellularLocation>
</comment>
<comment type="domain">
    <text>The Q motif is unique to and characteristic of the DEAD box family of RNA helicases and controls ATP binding and hydrolysis.</text>
</comment>
<comment type="similarity">
    <text evidence="5">Belongs to the DEAD box helicase family. DDX56/DBP9 subfamily.</text>
</comment>
<accession>A1C7F7</accession>
<keyword id="KW-0067">ATP-binding</keyword>
<keyword id="KW-0347">Helicase</keyword>
<keyword id="KW-0378">Hydrolase</keyword>
<keyword id="KW-0547">Nucleotide-binding</keyword>
<keyword id="KW-0539">Nucleus</keyword>
<keyword id="KW-1185">Reference proteome</keyword>
<keyword id="KW-0690">Ribosome biogenesis</keyword>
<keyword id="KW-0694">RNA-binding</keyword>
<keyword id="KW-0698">rRNA processing</keyword>
<feature type="chain" id="PRO_0000281717" description="ATP-dependent RNA helicase dbp9">
    <location>
        <begin position="1"/>
        <end position="621"/>
    </location>
</feature>
<feature type="domain" description="Helicase ATP-binding" evidence="2">
    <location>
        <begin position="58"/>
        <end position="236"/>
    </location>
</feature>
<feature type="domain" description="Helicase C-terminal" evidence="3">
    <location>
        <begin position="247"/>
        <end position="489"/>
    </location>
</feature>
<feature type="region of interest" description="Disordered" evidence="4">
    <location>
        <begin position="1"/>
        <end position="30"/>
    </location>
</feature>
<feature type="region of interest" description="Disordered" evidence="4">
    <location>
        <begin position="342"/>
        <end position="393"/>
    </location>
</feature>
<feature type="region of interest" description="Disordered" evidence="4">
    <location>
        <begin position="581"/>
        <end position="621"/>
    </location>
</feature>
<feature type="short sequence motif" description="Q motif">
    <location>
        <begin position="27"/>
        <end position="55"/>
    </location>
</feature>
<feature type="short sequence motif" description="DEAD box">
    <location>
        <begin position="184"/>
        <end position="187"/>
    </location>
</feature>
<feature type="compositionally biased region" description="Basic and acidic residues" evidence="4">
    <location>
        <begin position="16"/>
        <end position="25"/>
    </location>
</feature>
<feature type="compositionally biased region" description="Acidic residues" evidence="4">
    <location>
        <begin position="364"/>
        <end position="373"/>
    </location>
</feature>
<feature type="compositionally biased region" description="Basic residues" evidence="4">
    <location>
        <begin position="589"/>
        <end position="606"/>
    </location>
</feature>
<feature type="binding site" evidence="2">
    <location>
        <begin position="71"/>
        <end position="78"/>
    </location>
    <ligand>
        <name>ATP</name>
        <dbReference type="ChEBI" id="CHEBI:30616"/>
    </ligand>
</feature>